<sequence>MLPLAVILSELQEPKTIVPVLSSLRSGSPVWSNISGPDQKHLVSRTLNLTRSSIQFRRWFGINVIRVLADNYKIMAGDGSQIIGQLLKLLEQCNQFTSAVYFKSLVECIDHVCDSIRGKPTMTRELLTPNLPAIIGLYLEKFSHDPAYLVSRLAPYIRAHPTTFRPFGNKLRSKIMETILSPAFSNFPDSSKDIFCNTLSTLCAVEKIEPEERWSSDLFSLIGELSNTLEIYGEFLNFEDDAELGKLLKKIPRSSSGESEFPSLSIDINDPSSFYSLPERLDILLRLIRGYLSAPTSFVAKVPLGIIALVVEAVLSINSRFIPFKREIRDESTKQIIRNTLQCAHSSALGLLKVLPSIFRGSLVPYMRRILGLLETLIPMKKKSLDTDQIVANEQFICLVLDCVACNISLVSYYQDSTGLVRLIDAAMAIVQPRSSSNTSSNTANTISSNGKKKKKQASVPLADVLSHQHLFNISVSESTTNHVQSFVNTLISCADLPSAQHNKVCKFVIVEAVKASHHIQEGTVPKQLRNLLVNAVLHPGFETTSILPIVCSILKEDELLSVFRNPRFPPVLKAVEVKEEEEEEEEEEESEEEPEEAEEAEEVVNGSRTEREVAPETKEVEPENKRRKIEIPEAVSVEPQVSEPQISTSLQHSISNQPEPAEPKNLRAPEPVKQANNPKLTEPSAAKDLREDFSDDSDFEMPEIDVDSDDE</sequence>
<gene>
    <name type="primary">RIX1</name>
    <name type="ORF">PGUG_04168</name>
</gene>
<name>RIX1_PICGU</name>
<evidence type="ECO:0000250" key="1">
    <source>
        <dbReference type="UniProtKB" id="P38883"/>
    </source>
</evidence>
<evidence type="ECO:0000256" key="2">
    <source>
        <dbReference type="SAM" id="MobiDB-lite"/>
    </source>
</evidence>
<evidence type="ECO:0000305" key="3"/>
<keyword id="KW-0539">Nucleus</keyword>
<keyword id="KW-1185">Reference proteome</keyword>
<keyword id="KW-0690">Ribosome biogenesis</keyword>
<keyword id="KW-0698">rRNA processing</keyword>
<reference key="1">
    <citation type="journal article" date="2009" name="Nature">
        <title>Evolution of pathogenicity and sexual reproduction in eight Candida genomes.</title>
        <authorList>
            <person name="Butler G."/>
            <person name="Rasmussen M.D."/>
            <person name="Lin M.F."/>
            <person name="Santos M.A.S."/>
            <person name="Sakthikumar S."/>
            <person name="Munro C.A."/>
            <person name="Rheinbay E."/>
            <person name="Grabherr M."/>
            <person name="Forche A."/>
            <person name="Reedy J.L."/>
            <person name="Agrafioti I."/>
            <person name="Arnaud M.B."/>
            <person name="Bates S."/>
            <person name="Brown A.J.P."/>
            <person name="Brunke S."/>
            <person name="Costanzo M.C."/>
            <person name="Fitzpatrick D.A."/>
            <person name="de Groot P.W.J."/>
            <person name="Harris D."/>
            <person name="Hoyer L.L."/>
            <person name="Hube B."/>
            <person name="Klis F.M."/>
            <person name="Kodira C."/>
            <person name="Lennard N."/>
            <person name="Logue M.E."/>
            <person name="Martin R."/>
            <person name="Neiman A.M."/>
            <person name="Nikolaou E."/>
            <person name="Quail M.A."/>
            <person name="Quinn J."/>
            <person name="Santos M.C."/>
            <person name="Schmitzberger F.F."/>
            <person name="Sherlock G."/>
            <person name="Shah P."/>
            <person name="Silverstein K.A.T."/>
            <person name="Skrzypek M.S."/>
            <person name="Soll D."/>
            <person name="Staggs R."/>
            <person name="Stansfield I."/>
            <person name="Stumpf M.P.H."/>
            <person name="Sudbery P.E."/>
            <person name="Srikantha T."/>
            <person name="Zeng Q."/>
            <person name="Berman J."/>
            <person name="Berriman M."/>
            <person name="Heitman J."/>
            <person name="Gow N.A.R."/>
            <person name="Lorenz M.C."/>
            <person name="Birren B.W."/>
            <person name="Kellis M."/>
            <person name="Cuomo C.A."/>
        </authorList>
    </citation>
    <scope>NUCLEOTIDE SEQUENCE [LARGE SCALE GENOMIC DNA]</scope>
    <source>
        <strain>ATCC 6260 / CBS 566 / DSM 6381 / JCM 1539 / NBRC 10279 / NRRL Y-324</strain>
    </source>
</reference>
<comment type="function">
    <text evidence="1">Component of the RIX1 complex required for processing of ITS2 sequences from 35S pre-rRNA and the nucleoplasmic transit of the pre-60S ribosomal subunits. Regulates pre-60S association of the critical remodeling factor MDN1.</text>
</comment>
<comment type="subunit">
    <text evidence="1">Component of the RIX1 complex, composed of IPI1, RIX1/IPI2 and IPI3 in a 1:2:2 stoichiometry. The complex interacts (via RIX1) with MDN1 (via its hexameric AAA ATPase ring) and the pre-60S ribosome particles.</text>
</comment>
<comment type="subcellular location">
    <subcellularLocation>
        <location evidence="1">Nucleus</location>
    </subcellularLocation>
</comment>
<comment type="similarity">
    <text evidence="3">Belongs to the RIX1/PELP1 family.</text>
</comment>
<feature type="chain" id="PRO_0000308920" description="Pre-rRNA-processing protein RIX1">
    <location>
        <begin position="1"/>
        <end position="712"/>
    </location>
</feature>
<feature type="region of interest" description="Disordered" evidence="2">
    <location>
        <begin position="435"/>
        <end position="456"/>
    </location>
</feature>
<feature type="region of interest" description="Disordered" evidence="2">
    <location>
        <begin position="575"/>
        <end position="712"/>
    </location>
</feature>
<feature type="compositionally biased region" description="Low complexity" evidence="2">
    <location>
        <begin position="435"/>
        <end position="450"/>
    </location>
</feature>
<feature type="compositionally biased region" description="Acidic residues" evidence="2">
    <location>
        <begin position="579"/>
        <end position="603"/>
    </location>
</feature>
<feature type="compositionally biased region" description="Basic and acidic residues" evidence="2">
    <location>
        <begin position="609"/>
        <end position="625"/>
    </location>
</feature>
<feature type="compositionally biased region" description="Polar residues" evidence="2">
    <location>
        <begin position="643"/>
        <end position="659"/>
    </location>
</feature>
<feature type="compositionally biased region" description="Acidic residues" evidence="2">
    <location>
        <begin position="694"/>
        <end position="712"/>
    </location>
</feature>
<accession>A5DLL7</accession>
<dbReference type="EMBL" id="CH408159">
    <property type="protein sequence ID" value="EDK40070.2"/>
    <property type="molecule type" value="Genomic_DNA"/>
</dbReference>
<dbReference type="RefSeq" id="XP_001483439.1">
    <property type="nucleotide sequence ID" value="XM_001483389.1"/>
</dbReference>
<dbReference type="SMR" id="A5DLL7"/>
<dbReference type="FunCoup" id="A5DLL7">
    <property type="interactions" value="313"/>
</dbReference>
<dbReference type="STRING" id="294746.A5DLL7"/>
<dbReference type="GeneID" id="5125598"/>
<dbReference type="KEGG" id="pgu:PGUG_04168"/>
<dbReference type="VEuPathDB" id="FungiDB:PGUG_04168"/>
<dbReference type="eggNOG" id="ENOG502R65X">
    <property type="taxonomic scope" value="Eukaryota"/>
</dbReference>
<dbReference type="HOGENOM" id="CLU_020084_1_0_1"/>
<dbReference type="InParanoid" id="A5DLL7"/>
<dbReference type="OMA" id="WCGINLI"/>
<dbReference type="OrthoDB" id="20900at2759"/>
<dbReference type="Proteomes" id="UP000001997">
    <property type="component" value="Unassembled WGS sequence"/>
</dbReference>
<dbReference type="GO" id="GO:0005634">
    <property type="term" value="C:nucleus"/>
    <property type="evidence" value="ECO:0007669"/>
    <property type="project" value="UniProtKB-SubCell"/>
</dbReference>
<dbReference type="GO" id="GO:0006364">
    <property type="term" value="P:rRNA processing"/>
    <property type="evidence" value="ECO:0007669"/>
    <property type="project" value="UniProtKB-KW"/>
</dbReference>
<dbReference type="InterPro" id="IPR016024">
    <property type="entry name" value="ARM-type_fold"/>
</dbReference>
<dbReference type="InterPro" id="IPR012583">
    <property type="entry name" value="RIX1_N"/>
</dbReference>
<dbReference type="PANTHER" id="PTHR34105">
    <property type="entry name" value="PROLINE-, GLUTAMIC ACID- AND LEUCINE-RICH PROTEIN 1"/>
    <property type="match status" value="1"/>
</dbReference>
<dbReference type="PANTHER" id="PTHR34105:SF1">
    <property type="entry name" value="PROLINE-, GLUTAMIC ACID- AND LEUCINE-RICH PROTEIN 1"/>
    <property type="match status" value="1"/>
</dbReference>
<dbReference type="Pfam" id="PF08167">
    <property type="entry name" value="RIX1"/>
    <property type="match status" value="1"/>
</dbReference>
<dbReference type="SUPFAM" id="SSF48371">
    <property type="entry name" value="ARM repeat"/>
    <property type="match status" value="1"/>
</dbReference>
<organism>
    <name type="scientific">Meyerozyma guilliermondii (strain ATCC 6260 / CBS 566 / DSM 6381 / JCM 1539 / NBRC 10279 / NRRL Y-324)</name>
    <name type="common">Yeast</name>
    <name type="synonym">Candida guilliermondii</name>
    <dbReference type="NCBI Taxonomy" id="294746"/>
    <lineage>
        <taxon>Eukaryota</taxon>
        <taxon>Fungi</taxon>
        <taxon>Dikarya</taxon>
        <taxon>Ascomycota</taxon>
        <taxon>Saccharomycotina</taxon>
        <taxon>Pichiomycetes</taxon>
        <taxon>Debaryomycetaceae</taxon>
        <taxon>Meyerozyma</taxon>
    </lineage>
</organism>
<protein>
    <recommendedName>
        <fullName>Pre-rRNA-processing protein RIX1</fullName>
    </recommendedName>
</protein>
<proteinExistence type="inferred from homology"/>